<comment type="function">
    <text evidence="1">Catalyzes the reversible phosphorylation of UMP to UDP.</text>
</comment>
<comment type="catalytic activity">
    <reaction evidence="1">
        <text>UMP + ATP = UDP + ADP</text>
        <dbReference type="Rhea" id="RHEA:24400"/>
        <dbReference type="ChEBI" id="CHEBI:30616"/>
        <dbReference type="ChEBI" id="CHEBI:57865"/>
        <dbReference type="ChEBI" id="CHEBI:58223"/>
        <dbReference type="ChEBI" id="CHEBI:456216"/>
        <dbReference type="EC" id="2.7.4.22"/>
    </reaction>
</comment>
<comment type="activity regulation">
    <text evidence="1">Allosterically activated by GTP. Inhibited by UTP.</text>
</comment>
<comment type="pathway">
    <text evidence="1">Pyrimidine metabolism; CTP biosynthesis via de novo pathway; UDP from UMP (UMPK route): step 1/1.</text>
</comment>
<comment type="subunit">
    <text evidence="1">Homohexamer.</text>
</comment>
<comment type="subcellular location">
    <subcellularLocation>
        <location evidence="1">Cytoplasm</location>
    </subcellularLocation>
</comment>
<comment type="similarity">
    <text evidence="1">Belongs to the UMP kinase family.</text>
</comment>
<name>PYRH_SULNB</name>
<proteinExistence type="inferred from homology"/>
<keyword id="KW-0021">Allosteric enzyme</keyword>
<keyword id="KW-0067">ATP-binding</keyword>
<keyword id="KW-0963">Cytoplasm</keyword>
<keyword id="KW-0418">Kinase</keyword>
<keyword id="KW-0547">Nucleotide-binding</keyword>
<keyword id="KW-0665">Pyrimidine biosynthesis</keyword>
<keyword id="KW-0808">Transferase</keyword>
<feature type="chain" id="PRO_1000054041" description="Uridylate kinase">
    <location>
        <begin position="1"/>
        <end position="235"/>
    </location>
</feature>
<feature type="region of interest" description="Involved in allosteric activation by GTP" evidence="1">
    <location>
        <begin position="16"/>
        <end position="21"/>
    </location>
</feature>
<feature type="binding site" evidence="1">
    <location>
        <begin position="8"/>
        <end position="11"/>
    </location>
    <ligand>
        <name>ATP</name>
        <dbReference type="ChEBI" id="CHEBI:30616"/>
    </ligand>
</feature>
<feature type="binding site" evidence="1">
    <location>
        <position position="50"/>
    </location>
    <ligand>
        <name>UMP</name>
        <dbReference type="ChEBI" id="CHEBI:57865"/>
    </ligand>
</feature>
<feature type="binding site" evidence="1">
    <location>
        <position position="51"/>
    </location>
    <ligand>
        <name>ATP</name>
        <dbReference type="ChEBI" id="CHEBI:30616"/>
    </ligand>
</feature>
<feature type="binding site" evidence="1">
    <location>
        <position position="55"/>
    </location>
    <ligand>
        <name>ATP</name>
        <dbReference type="ChEBI" id="CHEBI:30616"/>
    </ligand>
</feature>
<feature type="binding site" evidence="1">
    <location>
        <position position="71"/>
    </location>
    <ligand>
        <name>UMP</name>
        <dbReference type="ChEBI" id="CHEBI:57865"/>
    </ligand>
</feature>
<feature type="binding site" evidence="1">
    <location>
        <begin position="132"/>
        <end position="139"/>
    </location>
    <ligand>
        <name>UMP</name>
        <dbReference type="ChEBI" id="CHEBI:57865"/>
    </ligand>
</feature>
<feature type="binding site" evidence="1">
    <location>
        <position position="159"/>
    </location>
    <ligand>
        <name>ATP</name>
        <dbReference type="ChEBI" id="CHEBI:30616"/>
    </ligand>
</feature>
<feature type="binding site" evidence="1">
    <location>
        <position position="165"/>
    </location>
    <ligand>
        <name>ATP</name>
        <dbReference type="ChEBI" id="CHEBI:30616"/>
    </ligand>
</feature>
<feature type="binding site" evidence="1">
    <location>
        <position position="168"/>
    </location>
    <ligand>
        <name>ATP</name>
        <dbReference type="ChEBI" id="CHEBI:30616"/>
    </ligand>
</feature>
<evidence type="ECO:0000255" key="1">
    <source>
        <dbReference type="HAMAP-Rule" id="MF_01220"/>
    </source>
</evidence>
<organism>
    <name type="scientific">Sulfurovum sp. (strain NBC37-1)</name>
    <dbReference type="NCBI Taxonomy" id="387093"/>
    <lineage>
        <taxon>Bacteria</taxon>
        <taxon>Pseudomonadati</taxon>
        <taxon>Campylobacterota</taxon>
        <taxon>Epsilonproteobacteria</taxon>
        <taxon>Campylobacterales</taxon>
        <taxon>Sulfurovaceae</taxon>
        <taxon>Sulfurovum</taxon>
    </lineage>
</organism>
<protein>
    <recommendedName>
        <fullName evidence="1">Uridylate kinase</fullName>
        <shortName evidence="1">UK</shortName>
        <ecNumber evidence="1">2.7.4.22</ecNumber>
    </recommendedName>
    <alternativeName>
        <fullName evidence="1">Uridine monophosphate kinase</fullName>
        <shortName evidence="1">UMP kinase</shortName>
        <shortName evidence="1">UMPK</shortName>
    </alternativeName>
</protein>
<gene>
    <name evidence="1" type="primary">pyrH</name>
    <name type="ordered locus">SUN_1747</name>
</gene>
<sequence>MTKRVLVKFSGEALAGKEGYGIDTKILKFIASEIKALVDAGMEVAIVVGGGNIIRGVSAAADGIIKRTSGDYMGMLATVINGVAIQEALEHIGLEARLQSAIDMHEIGEAFIIRRARRHLEKGRVVIFAGGTGNPYFTTDTAATLRASEIEAELLIKATKVDGVYDKDPNKFDDAVKLDTLTYEQALTKDIKVMDDTSIALARENSLPIVVCNMFEEGNLLAIMKGDMSLCSIVK</sequence>
<reference key="1">
    <citation type="journal article" date="2007" name="Proc. Natl. Acad. Sci. U.S.A.">
        <title>Deep-sea vent epsilon-proteobacterial genomes provide insights into emergence of pathogens.</title>
        <authorList>
            <person name="Nakagawa S."/>
            <person name="Takaki Y."/>
            <person name="Shimamura S."/>
            <person name="Reysenbach A.-L."/>
            <person name="Takai K."/>
            <person name="Horikoshi K."/>
        </authorList>
    </citation>
    <scope>NUCLEOTIDE SEQUENCE [LARGE SCALE GENOMIC DNA]</scope>
    <source>
        <strain>NBC37-1</strain>
    </source>
</reference>
<dbReference type="EC" id="2.7.4.22" evidence="1"/>
<dbReference type="EMBL" id="AP009179">
    <property type="protein sequence ID" value="BAF72694.1"/>
    <property type="molecule type" value="Genomic_DNA"/>
</dbReference>
<dbReference type="RefSeq" id="WP_012083504.1">
    <property type="nucleotide sequence ID" value="NC_009663.1"/>
</dbReference>
<dbReference type="SMR" id="A6QB35"/>
<dbReference type="STRING" id="387093.SUN_1747"/>
<dbReference type="KEGG" id="sun:SUN_1747"/>
<dbReference type="eggNOG" id="COG0528">
    <property type="taxonomic scope" value="Bacteria"/>
</dbReference>
<dbReference type="HOGENOM" id="CLU_033861_0_0_7"/>
<dbReference type="OrthoDB" id="9807458at2"/>
<dbReference type="UniPathway" id="UPA00159">
    <property type="reaction ID" value="UER00275"/>
</dbReference>
<dbReference type="Proteomes" id="UP000006378">
    <property type="component" value="Chromosome"/>
</dbReference>
<dbReference type="GO" id="GO:0005829">
    <property type="term" value="C:cytosol"/>
    <property type="evidence" value="ECO:0007669"/>
    <property type="project" value="TreeGrafter"/>
</dbReference>
<dbReference type="GO" id="GO:0005524">
    <property type="term" value="F:ATP binding"/>
    <property type="evidence" value="ECO:0007669"/>
    <property type="project" value="UniProtKB-KW"/>
</dbReference>
<dbReference type="GO" id="GO:0033862">
    <property type="term" value="F:UMP kinase activity"/>
    <property type="evidence" value="ECO:0007669"/>
    <property type="project" value="UniProtKB-EC"/>
</dbReference>
<dbReference type="GO" id="GO:0044210">
    <property type="term" value="P:'de novo' CTP biosynthetic process"/>
    <property type="evidence" value="ECO:0007669"/>
    <property type="project" value="UniProtKB-UniRule"/>
</dbReference>
<dbReference type="GO" id="GO:0006225">
    <property type="term" value="P:UDP biosynthetic process"/>
    <property type="evidence" value="ECO:0007669"/>
    <property type="project" value="TreeGrafter"/>
</dbReference>
<dbReference type="CDD" id="cd04254">
    <property type="entry name" value="AAK_UMPK-PyrH-Ec"/>
    <property type="match status" value="1"/>
</dbReference>
<dbReference type="FunFam" id="3.40.1160.10:FF:000001">
    <property type="entry name" value="Uridylate kinase"/>
    <property type="match status" value="1"/>
</dbReference>
<dbReference type="Gene3D" id="3.40.1160.10">
    <property type="entry name" value="Acetylglutamate kinase-like"/>
    <property type="match status" value="1"/>
</dbReference>
<dbReference type="HAMAP" id="MF_01220_B">
    <property type="entry name" value="PyrH_B"/>
    <property type="match status" value="1"/>
</dbReference>
<dbReference type="InterPro" id="IPR036393">
    <property type="entry name" value="AceGlu_kinase-like_sf"/>
</dbReference>
<dbReference type="InterPro" id="IPR001048">
    <property type="entry name" value="Asp/Glu/Uridylate_kinase"/>
</dbReference>
<dbReference type="InterPro" id="IPR011817">
    <property type="entry name" value="Uridylate_kinase"/>
</dbReference>
<dbReference type="InterPro" id="IPR015963">
    <property type="entry name" value="Uridylate_kinase_bac"/>
</dbReference>
<dbReference type="NCBIfam" id="TIGR02075">
    <property type="entry name" value="pyrH_bact"/>
    <property type="match status" value="1"/>
</dbReference>
<dbReference type="PANTHER" id="PTHR42833">
    <property type="entry name" value="URIDYLATE KINASE"/>
    <property type="match status" value="1"/>
</dbReference>
<dbReference type="PANTHER" id="PTHR42833:SF4">
    <property type="entry name" value="URIDYLATE KINASE PUMPKIN, CHLOROPLASTIC"/>
    <property type="match status" value="1"/>
</dbReference>
<dbReference type="Pfam" id="PF00696">
    <property type="entry name" value="AA_kinase"/>
    <property type="match status" value="1"/>
</dbReference>
<dbReference type="PIRSF" id="PIRSF005650">
    <property type="entry name" value="Uridylate_kin"/>
    <property type="match status" value="1"/>
</dbReference>
<dbReference type="SUPFAM" id="SSF53633">
    <property type="entry name" value="Carbamate kinase-like"/>
    <property type="match status" value="1"/>
</dbReference>
<accession>A6QB35</accession>